<evidence type="ECO:0000255" key="1">
    <source>
        <dbReference type="HAMAP-Rule" id="MF_01337"/>
    </source>
</evidence>
<evidence type="ECO:0000305" key="2"/>
<feature type="chain" id="PRO_1000142647" description="Large ribosomal subunit protein uL18">
    <location>
        <begin position="1"/>
        <end position="117"/>
    </location>
</feature>
<keyword id="KW-0687">Ribonucleoprotein</keyword>
<keyword id="KW-0689">Ribosomal protein</keyword>
<keyword id="KW-0694">RNA-binding</keyword>
<keyword id="KW-0699">rRNA-binding</keyword>
<gene>
    <name evidence="1" type="primary">rplR</name>
    <name type="ordered locus">CbuG_1751</name>
</gene>
<dbReference type="EMBL" id="CP001019">
    <property type="protein sequence ID" value="ACJ19025.1"/>
    <property type="molecule type" value="Genomic_DNA"/>
</dbReference>
<dbReference type="RefSeq" id="WP_005771517.1">
    <property type="nucleotide sequence ID" value="NC_011527.1"/>
</dbReference>
<dbReference type="SMR" id="B6J247"/>
<dbReference type="KEGG" id="cbg:CbuG_1751"/>
<dbReference type="HOGENOM" id="CLU_098841_0_1_6"/>
<dbReference type="GO" id="GO:0022625">
    <property type="term" value="C:cytosolic large ribosomal subunit"/>
    <property type="evidence" value="ECO:0007669"/>
    <property type="project" value="TreeGrafter"/>
</dbReference>
<dbReference type="GO" id="GO:0008097">
    <property type="term" value="F:5S rRNA binding"/>
    <property type="evidence" value="ECO:0007669"/>
    <property type="project" value="TreeGrafter"/>
</dbReference>
<dbReference type="GO" id="GO:0003735">
    <property type="term" value="F:structural constituent of ribosome"/>
    <property type="evidence" value="ECO:0007669"/>
    <property type="project" value="InterPro"/>
</dbReference>
<dbReference type="GO" id="GO:0006412">
    <property type="term" value="P:translation"/>
    <property type="evidence" value="ECO:0007669"/>
    <property type="project" value="UniProtKB-UniRule"/>
</dbReference>
<dbReference type="CDD" id="cd00432">
    <property type="entry name" value="Ribosomal_L18_L5e"/>
    <property type="match status" value="1"/>
</dbReference>
<dbReference type="FunFam" id="3.30.420.100:FF:000001">
    <property type="entry name" value="50S ribosomal protein L18"/>
    <property type="match status" value="1"/>
</dbReference>
<dbReference type="Gene3D" id="3.30.420.100">
    <property type="match status" value="1"/>
</dbReference>
<dbReference type="HAMAP" id="MF_01337_B">
    <property type="entry name" value="Ribosomal_uL18_B"/>
    <property type="match status" value="1"/>
</dbReference>
<dbReference type="InterPro" id="IPR004389">
    <property type="entry name" value="Ribosomal_uL18_bac-type"/>
</dbReference>
<dbReference type="InterPro" id="IPR005484">
    <property type="entry name" value="Ribosomal_uL18_bac/euk"/>
</dbReference>
<dbReference type="NCBIfam" id="TIGR00060">
    <property type="entry name" value="L18_bact"/>
    <property type="match status" value="1"/>
</dbReference>
<dbReference type="PANTHER" id="PTHR12899">
    <property type="entry name" value="39S RIBOSOMAL PROTEIN L18, MITOCHONDRIAL"/>
    <property type="match status" value="1"/>
</dbReference>
<dbReference type="PANTHER" id="PTHR12899:SF3">
    <property type="entry name" value="LARGE RIBOSOMAL SUBUNIT PROTEIN UL18M"/>
    <property type="match status" value="1"/>
</dbReference>
<dbReference type="Pfam" id="PF00861">
    <property type="entry name" value="Ribosomal_L18p"/>
    <property type="match status" value="1"/>
</dbReference>
<dbReference type="SUPFAM" id="SSF53137">
    <property type="entry name" value="Translational machinery components"/>
    <property type="match status" value="1"/>
</dbReference>
<name>RL18_COXB2</name>
<reference key="1">
    <citation type="journal article" date="2009" name="Infect. Immun.">
        <title>Comparative genomics reveal extensive transposon-mediated genomic plasticity and diversity among potential effector proteins within the genus Coxiella.</title>
        <authorList>
            <person name="Beare P.A."/>
            <person name="Unsworth N."/>
            <person name="Andoh M."/>
            <person name="Voth D.E."/>
            <person name="Omsland A."/>
            <person name="Gilk S.D."/>
            <person name="Williams K.P."/>
            <person name="Sobral B.W."/>
            <person name="Kupko J.J. III"/>
            <person name="Porcella S.F."/>
            <person name="Samuel J.E."/>
            <person name="Heinzen R.A."/>
        </authorList>
    </citation>
    <scope>NUCLEOTIDE SEQUENCE [LARGE SCALE GENOMIC DNA]</scope>
    <source>
        <strain>CbuG_Q212</strain>
    </source>
</reference>
<comment type="function">
    <text evidence="1">This is one of the proteins that bind and probably mediate the attachment of the 5S RNA into the large ribosomal subunit, where it forms part of the central protuberance.</text>
</comment>
<comment type="subunit">
    <text evidence="1">Part of the 50S ribosomal subunit; part of the 5S rRNA/L5/L18/L25 subcomplex. Contacts the 5S and 23S rRNAs.</text>
</comment>
<comment type="similarity">
    <text evidence="1">Belongs to the universal ribosomal protein uL18 family.</text>
</comment>
<organism>
    <name type="scientific">Coxiella burnetii (strain CbuG_Q212)</name>
    <name type="common">Coxiella burnetii (strain Q212)</name>
    <dbReference type="NCBI Taxonomy" id="434923"/>
    <lineage>
        <taxon>Bacteria</taxon>
        <taxon>Pseudomonadati</taxon>
        <taxon>Pseudomonadota</taxon>
        <taxon>Gammaproteobacteria</taxon>
        <taxon>Legionellales</taxon>
        <taxon>Coxiellaceae</taxon>
        <taxon>Coxiella</taxon>
    </lineage>
</organism>
<accession>B6J247</accession>
<sequence length="117" mass="13106">MDKQEKRIRRARRTRAKIKELGAVRLCVHRSLNHIYAQLISPRDSKVLVCASTLEKEVRSQIKHGGNIQAATAIGKLIAQRAKKAGVTKVAFDRSGYKYHGRVRALAEAVREGGIEF</sequence>
<proteinExistence type="inferred from homology"/>
<protein>
    <recommendedName>
        <fullName evidence="1">Large ribosomal subunit protein uL18</fullName>
    </recommendedName>
    <alternativeName>
        <fullName evidence="2">50S ribosomal protein L18</fullName>
    </alternativeName>
</protein>